<accession>Q2FHY3</accession>
<proteinExistence type="inferred from homology"/>
<protein>
    <recommendedName>
        <fullName evidence="1">UPF0223 protein SAUSA300_0997</fullName>
    </recommendedName>
</protein>
<feature type="chain" id="PRO_1000064145" description="UPF0223 protein SAUSA300_0997">
    <location>
        <begin position="1"/>
        <end position="91"/>
    </location>
</feature>
<reference key="1">
    <citation type="journal article" date="2006" name="Lancet">
        <title>Complete genome sequence of USA300, an epidemic clone of community-acquired meticillin-resistant Staphylococcus aureus.</title>
        <authorList>
            <person name="Diep B.A."/>
            <person name="Gill S.R."/>
            <person name="Chang R.F."/>
            <person name="Phan T.H."/>
            <person name="Chen J.H."/>
            <person name="Davidson M.G."/>
            <person name="Lin F."/>
            <person name="Lin J."/>
            <person name="Carleton H.A."/>
            <person name="Mongodin E.F."/>
            <person name="Sensabaugh G.F."/>
            <person name="Perdreau-Remington F."/>
        </authorList>
    </citation>
    <scope>NUCLEOTIDE SEQUENCE [LARGE SCALE GENOMIC DNA]</scope>
    <source>
        <strain>USA300</strain>
    </source>
</reference>
<sequence length="91" mass="10692">MEYEYPIDLDWSNEEMISVINFFNHVEKYYESGVTAGDFMGAYKRFKEIVPAKAEEKQIFNTFEKSSGYNSYKAVQDVKTHSEEQRVTAKK</sequence>
<name>Y997_STAA3</name>
<organism>
    <name type="scientific">Staphylococcus aureus (strain USA300)</name>
    <dbReference type="NCBI Taxonomy" id="367830"/>
    <lineage>
        <taxon>Bacteria</taxon>
        <taxon>Bacillati</taxon>
        <taxon>Bacillota</taxon>
        <taxon>Bacilli</taxon>
        <taxon>Bacillales</taxon>
        <taxon>Staphylococcaceae</taxon>
        <taxon>Staphylococcus</taxon>
    </lineage>
</organism>
<gene>
    <name type="ordered locus">SAUSA300_0997</name>
</gene>
<dbReference type="EMBL" id="CP000255">
    <property type="protein sequence ID" value="ABD21757.1"/>
    <property type="molecule type" value="Genomic_DNA"/>
</dbReference>
<dbReference type="RefSeq" id="WP_000455597.1">
    <property type="nucleotide sequence ID" value="NZ_CP027476.1"/>
</dbReference>
<dbReference type="SMR" id="Q2FHY3"/>
<dbReference type="KEGG" id="saa:SAUSA300_0997"/>
<dbReference type="HOGENOM" id="CLU_166693_0_0_9"/>
<dbReference type="OMA" id="SYDWSTQ"/>
<dbReference type="Proteomes" id="UP000001939">
    <property type="component" value="Chromosome"/>
</dbReference>
<dbReference type="Gene3D" id="1.10.220.80">
    <property type="entry name" value="BH2638-like"/>
    <property type="match status" value="1"/>
</dbReference>
<dbReference type="HAMAP" id="MF_01041">
    <property type="entry name" value="UPF0223"/>
    <property type="match status" value="1"/>
</dbReference>
<dbReference type="InterPro" id="IPR023324">
    <property type="entry name" value="BH2638-like_sf"/>
</dbReference>
<dbReference type="InterPro" id="IPR007920">
    <property type="entry name" value="UPF0223"/>
</dbReference>
<dbReference type="NCBIfam" id="NF003353">
    <property type="entry name" value="PRK04387.1"/>
    <property type="match status" value="1"/>
</dbReference>
<dbReference type="Pfam" id="PF05256">
    <property type="entry name" value="UPF0223"/>
    <property type="match status" value="1"/>
</dbReference>
<dbReference type="PIRSF" id="PIRSF037260">
    <property type="entry name" value="UPF0223"/>
    <property type="match status" value="1"/>
</dbReference>
<dbReference type="SUPFAM" id="SSF158504">
    <property type="entry name" value="BH2638-like"/>
    <property type="match status" value="1"/>
</dbReference>
<evidence type="ECO:0000255" key="1">
    <source>
        <dbReference type="HAMAP-Rule" id="MF_01041"/>
    </source>
</evidence>
<comment type="similarity">
    <text evidence="1">Belongs to the UPF0223 family.</text>
</comment>